<accession>A0A125S9G2</accession>
<name>CXN5_CONIM</name>
<protein>
    <recommendedName>
        <fullName evidence="5">Conotoxin Im23.5</fullName>
    </recommendedName>
    <alternativeName>
        <fullName evidence="4 7">Conopeptide im028</fullName>
    </alternativeName>
</protein>
<reference key="1">
    <citation type="journal article" date="2019" name="Mar. Drugs">
        <title>Transcriptomic-proteomic correlation in the predation-evoked venom of the cone snail, Conus imperialis.</title>
        <authorList>
            <person name="Jin A.H."/>
            <person name="Dutertre S."/>
            <person name="Dutt M."/>
            <person name="Lavergne V."/>
            <person name="Jones A."/>
            <person name="Lewis R.J."/>
            <person name="Alewood P.F."/>
        </authorList>
    </citation>
    <scope>NUCLEOTIDE SEQUENCE [MRNA]</scope>
    <scope>IDENTIFICATION BY MASS SPECTROMETRY</scope>
    <scope>SUBCELLULAR LOCATION</scope>
    <source>
        <tissue>Venom</tissue>
        <tissue>Venom duct</tissue>
    </source>
</reference>
<dbReference type="EMBL" id="KT377422">
    <property type="protein sequence ID" value="AME17686.1"/>
    <property type="molecule type" value="mRNA"/>
</dbReference>
<dbReference type="GO" id="GO:0005576">
    <property type="term" value="C:extracellular region"/>
    <property type="evidence" value="ECO:0007669"/>
    <property type="project" value="UniProtKB-SubCell"/>
</dbReference>
<dbReference type="GO" id="GO:0090729">
    <property type="term" value="F:toxin activity"/>
    <property type="evidence" value="ECO:0007669"/>
    <property type="project" value="UniProtKB-KW"/>
</dbReference>
<organism>
    <name type="scientific">Conus imperialis</name>
    <name type="common">Imperial cone</name>
    <dbReference type="NCBI Taxonomy" id="35631"/>
    <lineage>
        <taxon>Eukaryota</taxon>
        <taxon>Metazoa</taxon>
        <taxon>Spiralia</taxon>
        <taxon>Lophotrochozoa</taxon>
        <taxon>Mollusca</taxon>
        <taxon>Gastropoda</taxon>
        <taxon>Caenogastropoda</taxon>
        <taxon>Neogastropoda</taxon>
        <taxon>Conoidea</taxon>
        <taxon>Conidae</taxon>
        <taxon>Conus</taxon>
        <taxon>Stephanoconus</taxon>
    </lineage>
</organism>
<comment type="function">
    <text evidence="5">Probable neurotoxin.</text>
</comment>
<comment type="subcellular location">
    <subcellularLocation>
        <location evidence="3">Secreted</location>
    </subcellularLocation>
</comment>
<comment type="tissue specificity">
    <text evidence="6">Expressed by the venom duct.</text>
</comment>
<comment type="domain">
    <text evidence="5">The cysteine framework is XXIII (C-C-C-CC-C).</text>
</comment>
<keyword id="KW-0165">Cleavage on pair of basic residues</keyword>
<keyword id="KW-1015">Disulfide bond</keyword>
<keyword id="KW-0528">Neurotoxin</keyword>
<keyword id="KW-0964">Secreted</keyword>
<keyword id="KW-0732">Signal</keyword>
<keyword id="KW-0800">Toxin</keyword>
<sequence>MKFFTCLLLLLVVLTVVFDNVDACDRSCTGVMGHPSCATCCACFTSAGKRHADGQHSRMKVRTGAKNLLKRMPLH</sequence>
<proteinExistence type="evidence at protein level"/>
<feature type="signal peptide" evidence="2">
    <location>
        <begin position="1"/>
        <end position="23"/>
    </location>
</feature>
<feature type="propeptide" id="PRO_0000451008" evidence="5">
    <location>
        <begin position="24"/>
        <end position="50"/>
    </location>
</feature>
<feature type="peptide" id="PRO_5007179734" description="Conotoxin Im23.5">
    <location>
        <begin position="51"/>
        <end position="75"/>
    </location>
</feature>
<feature type="disulfide bond" evidence="1">
    <location>
        <begin position="24"/>
        <end position="28"/>
    </location>
</feature>
<feature type="disulfide bond" evidence="1">
    <location>
        <begin position="37"/>
        <end position="40"/>
    </location>
</feature>
<feature type="disulfide bond" evidence="1">
    <location>
        <begin position="41"/>
        <end position="43"/>
    </location>
</feature>
<evidence type="ECO:0000250" key="1">
    <source>
        <dbReference type="UniProtKB" id="D0PX84"/>
    </source>
</evidence>
<evidence type="ECO:0000255" key="2"/>
<evidence type="ECO:0000269" key="3">
    <source>
    </source>
</evidence>
<evidence type="ECO:0000303" key="4">
    <source>
    </source>
</evidence>
<evidence type="ECO:0000305" key="5"/>
<evidence type="ECO:0000305" key="6">
    <source>
    </source>
</evidence>
<evidence type="ECO:0000312" key="7">
    <source>
        <dbReference type="EMBL" id="AME17686.1"/>
    </source>
</evidence>